<evidence type="ECO:0000255" key="1">
    <source>
        <dbReference type="HAMAP-Rule" id="MF_01310"/>
    </source>
</evidence>
<evidence type="ECO:0000305" key="2"/>
<keyword id="KW-1185">Reference proteome</keyword>
<keyword id="KW-0687">Ribonucleoprotein</keyword>
<keyword id="KW-0689">Ribosomal protein</keyword>
<keyword id="KW-0694">RNA-binding</keyword>
<keyword id="KW-0699">rRNA-binding</keyword>
<comment type="function">
    <text evidence="1">Located on the platform of the 30S subunit, it bridges several disparate RNA helices of the 16S rRNA. Forms part of the Shine-Dalgarno cleft in the 70S ribosome.</text>
</comment>
<comment type="subunit">
    <text evidence="1">Part of the 30S ribosomal subunit. Interacts with proteins S7 and S18. Binds to IF-3.</text>
</comment>
<comment type="similarity">
    <text evidence="1">Belongs to the universal ribosomal protein uS11 family.</text>
</comment>
<gene>
    <name evidence="1" type="primary">rpsK</name>
    <name type="ordered locus">Hhal_0835</name>
</gene>
<accession>A1WV99</accession>
<sequence>MAKASSRGGGKKKVKRTVSDGVAHINATFNNTLITITDRQGNALSWASAGGSGFKGSRKSTPFAAQVASETAARAAQDYGLKNVEVRVKGPGPGRESAVRALNAVGYRITNISDVSPIPHNGCRPPKKRRV</sequence>
<name>RS11_HALHL</name>
<feature type="chain" id="PRO_0000294768" description="Small ribosomal subunit protein uS11">
    <location>
        <begin position="1"/>
        <end position="131"/>
    </location>
</feature>
<protein>
    <recommendedName>
        <fullName evidence="1">Small ribosomal subunit protein uS11</fullName>
    </recommendedName>
    <alternativeName>
        <fullName evidence="2">30S ribosomal protein S11</fullName>
    </alternativeName>
</protein>
<organism>
    <name type="scientific">Halorhodospira halophila (strain DSM 244 / SL1)</name>
    <name type="common">Ectothiorhodospira halophila (strain DSM 244 / SL1)</name>
    <dbReference type="NCBI Taxonomy" id="349124"/>
    <lineage>
        <taxon>Bacteria</taxon>
        <taxon>Pseudomonadati</taxon>
        <taxon>Pseudomonadota</taxon>
        <taxon>Gammaproteobacteria</taxon>
        <taxon>Chromatiales</taxon>
        <taxon>Ectothiorhodospiraceae</taxon>
        <taxon>Halorhodospira</taxon>
    </lineage>
</organism>
<proteinExistence type="inferred from homology"/>
<reference key="1">
    <citation type="submission" date="2006-12" db="EMBL/GenBank/DDBJ databases">
        <title>Complete sequence of Halorhodospira halophila SL1.</title>
        <authorList>
            <consortium name="US DOE Joint Genome Institute"/>
            <person name="Copeland A."/>
            <person name="Lucas S."/>
            <person name="Lapidus A."/>
            <person name="Barry K."/>
            <person name="Detter J.C."/>
            <person name="Glavina del Rio T."/>
            <person name="Hammon N."/>
            <person name="Israni S."/>
            <person name="Dalin E."/>
            <person name="Tice H."/>
            <person name="Pitluck S."/>
            <person name="Saunders E."/>
            <person name="Brettin T."/>
            <person name="Bruce D."/>
            <person name="Han C."/>
            <person name="Tapia R."/>
            <person name="Schmutz J."/>
            <person name="Larimer F."/>
            <person name="Land M."/>
            <person name="Hauser L."/>
            <person name="Kyrpides N."/>
            <person name="Mikhailova N."/>
            <person name="Hoff W."/>
            <person name="Richardson P."/>
        </authorList>
    </citation>
    <scope>NUCLEOTIDE SEQUENCE [LARGE SCALE GENOMIC DNA]</scope>
    <source>
        <strain>DSM 244 / SL1</strain>
    </source>
</reference>
<dbReference type="EMBL" id="CP000544">
    <property type="protein sequence ID" value="ABM61611.1"/>
    <property type="molecule type" value="Genomic_DNA"/>
</dbReference>
<dbReference type="RefSeq" id="WP_011813634.1">
    <property type="nucleotide sequence ID" value="NC_008789.1"/>
</dbReference>
<dbReference type="SMR" id="A1WV99"/>
<dbReference type="STRING" id="349124.Hhal_0835"/>
<dbReference type="KEGG" id="hha:Hhal_0835"/>
<dbReference type="eggNOG" id="COG0100">
    <property type="taxonomic scope" value="Bacteria"/>
</dbReference>
<dbReference type="HOGENOM" id="CLU_072439_5_0_6"/>
<dbReference type="OrthoDB" id="9806415at2"/>
<dbReference type="Proteomes" id="UP000000647">
    <property type="component" value="Chromosome"/>
</dbReference>
<dbReference type="GO" id="GO:1990904">
    <property type="term" value="C:ribonucleoprotein complex"/>
    <property type="evidence" value="ECO:0007669"/>
    <property type="project" value="UniProtKB-KW"/>
</dbReference>
<dbReference type="GO" id="GO:0005840">
    <property type="term" value="C:ribosome"/>
    <property type="evidence" value="ECO:0007669"/>
    <property type="project" value="UniProtKB-KW"/>
</dbReference>
<dbReference type="GO" id="GO:0019843">
    <property type="term" value="F:rRNA binding"/>
    <property type="evidence" value="ECO:0007669"/>
    <property type="project" value="UniProtKB-UniRule"/>
</dbReference>
<dbReference type="GO" id="GO:0003735">
    <property type="term" value="F:structural constituent of ribosome"/>
    <property type="evidence" value="ECO:0007669"/>
    <property type="project" value="InterPro"/>
</dbReference>
<dbReference type="GO" id="GO:0006412">
    <property type="term" value="P:translation"/>
    <property type="evidence" value="ECO:0007669"/>
    <property type="project" value="UniProtKB-UniRule"/>
</dbReference>
<dbReference type="FunFam" id="3.30.420.80:FF:000001">
    <property type="entry name" value="30S ribosomal protein S11"/>
    <property type="match status" value="1"/>
</dbReference>
<dbReference type="Gene3D" id="3.30.420.80">
    <property type="entry name" value="Ribosomal protein S11"/>
    <property type="match status" value="1"/>
</dbReference>
<dbReference type="HAMAP" id="MF_01310">
    <property type="entry name" value="Ribosomal_uS11"/>
    <property type="match status" value="1"/>
</dbReference>
<dbReference type="InterPro" id="IPR001971">
    <property type="entry name" value="Ribosomal_uS11"/>
</dbReference>
<dbReference type="InterPro" id="IPR019981">
    <property type="entry name" value="Ribosomal_uS11_bac-type"/>
</dbReference>
<dbReference type="InterPro" id="IPR018102">
    <property type="entry name" value="Ribosomal_uS11_CS"/>
</dbReference>
<dbReference type="InterPro" id="IPR036967">
    <property type="entry name" value="Ribosomal_uS11_sf"/>
</dbReference>
<dbReference type="NCBIfam" id="NF003698">
    <property type="entry name" value="PRK05309.1"/>
    <property type="match status" value="1"/>
</dbReference>
<dbReference type="NCBIfam" id="TIGR03632">
    <property type="entry name" value="uS11_bact"/>
    <property type="match status" value="1"/>
</dbReference>
<dbReference type="PANTHER" id="PTHR11759">
    <property type="entry name" value="40S RIBOSOMAL PROTEIN S14/30S RIBOSOMAL PROTEIN S11"/>
    <property type="match status" value="1"/>
</dbReference>
<dbReference type="Pfam" id="PF00411">
    <property type="entry name" value="Ribosomal_S11"/>
    <property type="match status" value="1"/>
</dbReference>
<dbReference type="PIRSF" id="PIRSF002131">
    <property type="entry name" value="Ribosomal_S11"/>
    <property type="match status" value="1"/>
</dbReference>
<dbReference type="SUPFAM" id="SSF53137">
    <property type="entry name" value="Translational machinery components"/>
    <property type="match status" value="1"/>
</dbReference>
<dbReference type="PROSITE" id="PS00054">
    <property type="entry name" value="RIBOSOMAL_S11"/>
    <property type="match status" value="1"/>
</dbReference>